<accession>P96169</accession>
<sequence length="543" mass="58875">MSNIEHGLSFIDIMVFAIYVAIIIGVGLWVSRDKKGTQKSTEDYFLAGKSLPWWAVGASLIAANISAEQFIGMSGSGYSIGLAIASYEWMSAITLIIVGKYFLPIFIEKGIYTIPEFVEKRFNKKLKTILAVFWISLYIFVNLTSVLYLGGLALETILGIPLMYSILGLALFALVYSIYGGLSAVVWTDVIQVFFLVLGGFMTTYMAVSFIGGTDGWFAGVSKMVDAAPGHFEMILDQSNPQYMNLPGIAVLIGGLWVANLYYWGFNQYIIQRTLAAKSVSEAQKGIVFAAFLKLIVPFLVVLPGIAAYVITSDPQLMASLGDIAATNLPSAANADKAYPWLTQFLPVGVKGVVFAALAAAIVSSLASMLNSTATIFTMDIYKEYISPDSGDHKLVNVGRTAAVVALIIACLIAPMLGGIGQAFQYIQEYTGLVSPGILAVFLLGLFWKKTTSKGAIIGVVASIPFALFLKFMPLSMPFMDQMLYTLLFTMVVIAFTSLSTSINDDDPKGISVTSSMFVTDRSFNIAAYGIMIVLAVLYTLFW</sequence>
<keyword id="KW-0002">3D-structure</keyword>
<keyword id="KW-1003">Cell membrane</keyword>
<keyword id="KW-0406">Ion transport</keyword>
<keyword id="KW-0472">Membrane</keyword>
<keyword id="KW-0915">Sodium</keyword>
<keyword id="KW-0739">Sodium transport</keyword>
<keyword id="KW-0762">Sugar transport</keyword>
<keyword id="KW-0769">Symport</keyword>
<keyword id="KW-0812">Transmembrane</keyword>
<keyword id="KW-1133">Transmembrane helix</keyword>
<keyword id="KW-0813">Transport</keyword>
<name>SGLT_VIBPH</name>
<reference key="1">
    <citation type="journal article" date="1996" name="Biochim. Biophys. Acta">
        <title>Sequence of a Na+/glucose symporter gene and its flanking regions of Vibrio parahaemolyticus.</title>
        <authorList>
            <person name="Sarker R.I."/>
            <person name="Okabe Y."/>
            <person name="Tsuda M."/>
            <person name="Tsuchiya T."/>
        </authorList>
    </citation>
    <scope>NUCLEOTIDE SEQUENCE [GENOMIC DNA]</scope>
    <source>
        <strain>AQ3334</strain>
    </source>
</reference>
<reference key="2">
    <citation type="journal article" date="2000" name="J. Biol. Chem.">
        <title>Molecular characterization of Vibrio parahaemolyticus vSGLT: a model for sodium-coupled sugar cotransporters.</title>
        <authorList>
            <person name="Turk E."/>
            <person name="Kim O."/>
            <person name="Le Coutre J."/>
            <person name="Whitelegge J.P."/>
            <person name="Eskandari S."/>
            <person name="Lam J.T."/>
            <person name="Kreman M."/>
            <person name="Zampighi G."/>
            <person name="Faull K.F."/>
            <person name="Wright E.M."/>
        </authorList>
    </citation>
    <scope>NUCLEOTIDE SEQUENCE [GENOMIC DNA]</scope>
</reference>
<reference key="3">
    <citation type="journal article" date="2000" name="Biochemistry">
        <title>Proteomics on full-length membrane proteins using mass spectrometry.</title>
        <authorList>
            <person name="le Coutre J."/>
            <person name="Whitelegge J.P."/>
            <person name="Gross A."/>
            <person name="Turk E."/>
            <person name="Wright E.M."/>
            <person name="Kaback H.R."/>
            <person name="Faull K.F."/>
        </authorList>
    </citation>
    <scope>MASS SPECTROMETRY OF FORMYLATED FORM</scope>
    <scope>SEQUENCE REVISION TO N-TERMINUS</scope>
</reference>
<gene>
    <name type="primary">sglT</name>
</gene>
<evidence type="ECO:0000250" key="1"/>
<evidence type="ECO:0000255" key="2"/>
<evidence type="ECO:0000269" key="3">
    <source>
    </source>
</evidence>
<evidence type="ECO:0000305" key="4"/>
<evidence type="ECO:0007829" key="5">
    <source>
        <dbReference type="PDB" id="2XQ2"/>
    </source>
</evidence>
<evidence type="ECO:0007829" key="6">
    <source>
        <dbReference type="PDB" id="3DH4"/>
    </source>
</evidence>
<comment type="function">
    <text evidence="1">Actively transports glucose into cells by Na(+) cotransport.</text>
</comment>
<comment type="subcellular location">
    <subcellularLocation>
        <location>Cell membrane</location>
        <topology>Multi-pass membrane protein</topology>
    </subcellularLocation>
</comment>
<comment type="mass spectrometry" mass="60680.0" method="Electrospray" evidence="3"/>
<comment type="similarity">
    <text evidence="4">Belongs to the sodium:solute symporter (SSF) (TC 2.A.21) family.</text>
</comment>
<dbReference type="EMBL" id="D78137">
    <property type="protein sequence ID" value="BAA11215.1"/>
    <property type="status" value="ALT_FRAME"/>
    <property type="molecule type" value="Genomic_DNA"/>
</dbReference>
<dbReference type="EMBL" id="AF255301">
    <property type="protein sequence ID" value="AAF80602.1"/>
    <property type="molecule type" value="Genomic_DNA"/>
</dbReference>
<dbReference type="RefSeq" id="WP_029825056.1">
    <property type="nucleotide sequence ID" value="NZ_VTGJ01000015.1"/>
</dbReference>
<dbReference type="PDB" id="2XQ2">
    <property type="method" value="X-ray"/>
    <property type="resolution" value="2.73 A"/>
    <property type="chains" value="A=1-543, B=51-543"/>
</dbReference>
<dbReference type="PDB" id="3DH4">
    <property type="method" value="X-ray"/>
    <property type="resolution" value="2.70 A"/>
    <property type="chains" value="A/B/C/D=47-543"/>
</dbReference>
<dbReference type="PDBsum" id="2XQ2"/>
<dbReference type="PDBsum" id="3DH4"/>
<dbReference type="SMR" id="P96169"/>
<dbReference type="TCDB" id="2.A.21.3.2">
    <property type="family name" value="the solute:sodium symporter (sss) family"/>
</dbReference>
<dbReference type="PATRIC" id="fig|670.406.peg.3043"/>
<dbReference type="EvolutionaryTrace" id="P96169"/>
<dbReference type="GO" id="GO:0005886">
    <property type="term" value="C:plasma membrane"/>
    <property type="evidence" value="ECO:0007669"/>
    <property type="project" value="UniProtKB-SubCell"/>
</dbReference>
<dbReference type="GO" id="GO:0005412">
    <property type="term" value="F:D-glucose:sodium symporter activity"/>
    <property type="evidence" value="ECO:0007669"/>
    <property type="project" value="TreeGrafter"/>
</dbReference>
<dbReference type="CDD" id="cd10325">
    <property type="entry name" value="SLC5sbd_vSGLT"/>
    <property type="match status" value="1"/>
</dbReference>
<dbReference type="Gene3D" id="1.20.1730.10">
    <property type="entry name" value="Sodium/glucose cotransporter"/>
    <property type="match status" value="1"/>
</dbReference>
<dbReference type="InterPro" id="IPR038377">
    <property type="entry name" value="Na/Glc_symporter_sf"/>
</dbReference>
<dbReference type="InterPro" id="IPR001734">
    <property type="entry name" value="Na/solute_symporter"/>
</dbReference>
<dbReference type="InterPro" id="IPR018212">
    <property type="entry name" value="Na/solute_symporter_CS"/>
</dbReference>
<dbReference type="NCBIfam" id="TIGR00813">
    <property type="entry name" value="sss"/>
    <property type="match status" value="1"/>
</dbReference>
<dbReference type="PANTHER" id="PTHR11819:SF195">
    <property type="entry name" value="SODIUM_GLUCOSE COTRANSPORTER 4"/>
    <property type="match status" value="1"/>
</dbReference>
<dbReference type="PANTHER" id="PTHR11819">
    <property type="entry name" value="SOLUTE CARRIER FAMILY 5"/>
    <property type="match status" value="1"/>
</dbReference>
<dbReference type="Pfam" id="PF00474">
    <property type="entry name" value="SSF"/>
    <property type="match status" value="1"/>
</dbReference>
<dbReference type="PROSITE" id="PS00456">
    <property type="entry name" value="NA_SOLUT_SYMP_1"/>
    <property type="match status" value="1"/>
</dbReference>
<dbReference type="PROSITE" id="PS50283">
    <property type="entry name" value="NA_SOLUT_SYMP_3"/>
    <property type="match status" value="1"/>
</dbReference>
<protein>
    <recommendedName>
        <fullName>Sodium/glucose cotransporter</fullName>
    </recommendedName>
    <alternativeName>
        <fullName>Na(+)/glucose symporter</fullName>
    </alternativeName>
</protein>
<organism>
    <name type="scientific">Vibrio parahaemolyticus</name>
    <dbReference type="NCBI Taxonomy" id="670"/>
    <lineage>
        <taxon>Bacteria</taxon>
        <taxon>Pseudomonadati</taxon>
        <taxon>Pseudomonadota</taxon>
        <taxon>Gammaproteobacteria</taxon>
        <taxon>Vibrionales</taxon>
        <taxon>Vibrionaceae</taxon>
        <taxon>Vibrio</taxon>
    </lineage>
</organism>
<feature type="chain" id="PRO_0000105405" description="Sodium/glucose cotransporter">
    <location>
        <begin position="1"/>
        <end position="543"/>
    </location>
</feature>
<feature type="transmembrane region" description="Helical" evidence="2">
    <location>
        <begin position="10"/>
        <end position="30"/>
    </location>
</feature>
<feature type="transmembrane region" description="Helical" evidence="2">
    <location>
        <begin position="45"/>
        <end position="65"/>
    </location>
</feature>
<feature type="transmembrane region" description="Helical" evidence="2">
    <location>
        <begin position="79"/>
        <end position="99"/>
    </location>
</feature>
<feature type="transmembrane region" description="Helical" evidence="2">
    <location>
        <begin position="129"/>
        <end position="149"/>
    </location>
</feature>
<feature type="transmembrane region" description="Helical" evidence="2">
    <location>
        <begin position="156"/>
        <end position="176"/>
    </location>
</feature>
<feature type="transmembrane region" description="Helical" evidence="2">
    <location>
        <begin position="193"/>
        <end position="213"/>
    </location>
</feature>
<feature type="transmembrane region" description="Helical" evidence="2">
    <location>
        <begin position="246"/>
        <end position="266"/>
    </location>
</feature>
<feature type="transmembrane region" description="Helical" evidence="2">
    <location>
        <begin position="287"/>
        <end position="307"/>
    </location>
</feature>
<feature type="transmembrane region" description="Helical" evidence="2">
    <location>
        <begin position="345"/>
        <end position="365"/>
    </location>
</feature>
<feature type="transmembrane region" description="Helical" evidence="2">
    <location>
        <begin position="401"/>
        <end position="421"/>
    </location>
</feature>
<feature type="transmembrane region" description="Helical" evidence="2">
    <location>
        <begin position="427"/>
        <end position="447"/>
    </location>
</feature>
<feature type="transmembrane region" description="Helical" evidence="2">
    <location>
        <begin position="455"/>
        <end position="475"/>
    </location>
</feature>
<feature type="transmembrane region" description="Helical" evidence="2">
    <location>
        <begin position="483"/>
        <end position="503"/>
    </location>
</feature>
<feature type="transmembrane region" description="Helical" evidence="2">
    <location>
        <begin position="523"/>
        <end position="543"/>
    </location>
</feature>
<feature type="helix" evidence="5">
    <location>
        <begin position="10"/>
        <end position="28"/>
    </location>
</feature>
<feature type="helix" evidence="6">
    <location>
        <begin position="53"/>
        <end position="64"/>
    </location>
</feature>
<feature type="helix" evidence="6">
    <location>
        <begin position="67"/>
        <end position="70"/>
    </location>
</feature>
<feature type="helix" evidence="6">
    <location>
        <begin position="72"/>
        <end position="79"/>
    </location>
</feature>
<feature type="helix" evidence="6">
    <location>
        <begin position="82"/>
        <end position="84"/>
    </location>
</feature>
<feature type="helix" evidence="6">
    <location>
        <begin position="85"/>
        <end position="101"/>
    </location>
</feature>
<feature type="helix" evidence="6">
    <location>
        <begin position="103"/>
        <end position="108"/>
    </location>
</feature>
<feature type="helix" evidence="6">
    <location>
        <begin position="114"/>
        <end position="121"/>
    </location>
</feature>
<feature type="helix" evidence="6">
    <location>
        <begin position="124"/>
        <end position="140"/>
    </location>
</feature>
<feature type="helix" evidence="6">
    <location>
        <begin position="142"/>
        <end position="157"/>
    </location>
</feature>
<feature type="helix" evidence="6">
    <location>
        <begin position="162"/>
        <end position="175"/>
    </location>
</feature>
<feature type="helix" evidence="6">
    <location>
        <begin position="188"/>
        <end position="212"/>
    </location>
</feature>
<feature type="helix" evidence="5">
    <location>
        <begin position="213"/>
        <end position="215"/>
    </location>
</feature>
<feature type="helix" evidence="6">
    <location>
        <begin position="217"/>
        <end position="227"/>
    </location>
</feature>
<feature type="helix" evidence="6">
    <location>
        <begin position="229"/>
        <end position="232"/>
    </location>
</feature>
<feature type="strand" evidence="6">
    <location>
        <begin position="238"/>
        <end position="241"/>
    </location>
</feature>
<feature type="helix" evidence="6">
    <location>
        <begin position="242"/>
        <end position="245"/>
    </location>
</feature>
<feature type="helix" evidence="6">
    <location>
        <begin position="250"/>
        <end position="253"/>
    </location>
</feature>
<feature type="helix" evidence="6">
    <location>
        <begin position="256"/>
        <end position="263"/>
    </location>
</feature>
<feature type="turn" evidence="6">
    <location>
        <begin position="264"/>
        <end position="267"/>
    </location>
</feature>
<feature type="helix" evidence="6">
    <location>
        <begin position="269"/>
        <end position="275"/>
    </location>
</feature>
<feature type="strand" evidence="6">
    <location>
        <begin position="276"/>
        <end position="278"/>
    </location>
</feature>
<feature type="helix" evidence="6">
    <location>
        <begin position="280"/>
        <end position="296"/>
    </location>
</feature>
<feature type="helix" evidence="6">
    <location>
        <begin position="297"/>
        <end position="299"/>
    </location>
</feature>
<feature type="helix" evidence="6">
    <location>
        <begin position="302"/>
        <end position="313"/>
    </location>
</feature>
<feature type="helix" evidence="6">
    <location>
        <begin position="315"/>
        <end position="321"/>
    </location>
</feature>
<feature type="strand" evidence="6">
    <location>
        <begin position="332"/>
        <end position="334"/>
    </location>
</feature>
<feature type="helix" evidence="6">
    <location>
        <begin position="335"/>
        <end position="337"/>
    </location>
</feature>
<feature type="helix" evidence="6">
    <location>
        <begin position="338"/>
        <end position="343"/>
    </location>
</feature>
<feature type="helix" evidence="6">
    <location>
        <begin position="350"/>
        <end position="380"/>
    </location>
</feature>
<feature type="helix" evidence="6">
    <location>
        <begin position="381"/>
        <end position="386"/>
    </location>
</feature>
<feature type="helix" evidence="6">
    <location>
        <begin position="394"/>
        <end position="413"/>
    </location>
</feature>
<feature type="helix" evidence="6">
    <location>
        <begin position="414"/>
        <end position="419"/>
    </location>
</feature>
<feature type="helix" evidence="6">
    <location>
        <begin position="423"/>
        <end position="431"/>
    </location>
</feature>
<feature type="turn" evidence="6">
    <location>
        <begin position="432"/>
        <end position="434"/>
    </location>
</feature>
<feature type="helix" evidence="6">
    <location>
        <begin position="435"/>
        <end position="447"/>
    </location>
</feature>
<feature type="helix" evidence="6">
    <location>
        <begin position="453"/>
        <end position="471"/>
    </location>
</feature>
<feature type="strand" evidence="6">
    <location>
        <begin position="473"/>
        <end position="475"/>
    </location>
</feature>
<feature type="helix" evidence="6">
    <location>
        <begin position="479"/>
        <end position="499"/>
    </location>
</feature>
<feature type="strand" evidence="6">
    <location>
        <begin position="503"/>
        <end position="506"/>
    </location>
</feature>
<feature type="strand" evidence="5">
    <location>
        <begin position="515"/>
        <end position="518"/>
    </location>
</feature>
<feature type="helix" evidence="6">
    <location>
        <begin position="524"/>
        <end position="543"/>
    </location>
</feature>
<proteinExistence type="evidence at protein level"/>